<sequence length="355" mass="40567">MLLLQIILLLLPVICSAGDRKPRHYEINLDEPPSQRWNQVIKDHLEYLPGVVEETKKYIPKPLQPFVWWAASKIDRYFTTEIQEELKGIASESGLPIGEIVGMNILYDVAAFDRRHIFGLGCTSIVAQNSAGQIIHGRNLDYDMTELLKNITIHVDFVRNGTIQYSGLTFALYNGVLTGQRPGEYSVSLNARYSGAYIDNILMEFYTKFKRPVSFFIRDVLENQATYTEAVDAFSRTHLFSPSYIIVAGIKKNEGVVISRNRWSAANVYPLNVDANQWFLVETNFDNWKKQGDDRRITAIQKLKELGRRNFDEKSMVEVLSTVPVRNNLTVFSTVMVPGLPDSADYFRQSTWILP</sequence>
<name>NAAA_CAEEL</name>
<protein>
    <recommendedName>
        <fullName>N-acylethanolamine-hydrolyzing acid amidase</fullName>
        <ecNumber evidence="2">3.5.1.60</ecNumber>
    </recommendedName>
    <component>
        <recommendedName>
            <fullName>N-acylethanolamine-hydrolyzing acid amidase subunit alpha</fullName>
        </recommendedName>
    </component>
    <component>
        <recommendedName>
            <fullName>N-acylethanolamine-hydrolyzing acid amidase subunit beta</fullName>
        </recommendedName>
    </component>
</protein>
<reference key="1">
    <citation type="journal article" date="1998" name="Science">
        <title>Genome sequence of the nematode C. elegans: a platform for investigating biology.</title>
        <authorList>
            <consortium name="The C. elegans sequencing consortium"/>
        </authorList>
    </citation>
    <scope>NUCLEOTIDE SEQUENCE [LARGE SCALE GENOMIC DNA]</scope>
    <source>
        <strain>Bristol N2</strain>
    </source>
</reference>
<reference evidence="10" key="2">
    <citation type="journal article" date="2018" name="Proc. Natl. Acad. Sci. U.S.A.">
        <title>Molecular mechanism of activation of the immunoregulatory amidase NAAA.</title>
        <authorList>
            <person name="Gorelik A."/>
            <person name="Gebai A."/>
            <person name="Illes K."/>
            <person name="Piomelli D."/>
            <person name="Nagar B."/>
        </authorList>
    </citation>
    <scope>X-RAY CRYSTALLOGRAPHY (2.70 ANGSTROMS) OF 19-121 AND 122-355</scope>
    <scope>PROTEOLYTIC CLEAVAGE</scope>
    <scope>SUBUNIT</scope>
    <scope>GLYCOSYLATION AT ASN-150</scope>
</reference>
<comment type="function">
    <text evidence="2">Degrades bioactive fatty acid amides, such as N-palmitoylethanolamine, to ethanolamine and free fatty acids.</text>
</comment>
<comment type="catalytic activity">
    <reaction evidence="2">
        <text>N-hexadecanoylethanolamine + H2O = ethanolamine + hexadecanoate</text>
        <dbReference type="Rhea" id="RHEA:45064"/>
        <dbReference type="ChEBI" id="CHEBI:7896"/>
        <dbReference type="ChEBI" id="CHEBI:15377"/>
        <dbReference type="ChEBI" id="CHEBI:57603"/>
        <dbReference type="ChEBI" id="CHEBI:71464"/>
    </reaction>
</comment>
<comment type="catalytic activity">
    <reaction evidence="2">
        <text>an N-(long-chain fatty acyl)ethanolamine + H2O = a long-chain fatty acid + ethanolamine</text>
        <dbReference type="Rhea" id="RHEA:17505"/>
        <dbReference type="ChEBI" id="CHEBI:15377"/>
        <dbReference type="ChEBI" id="CHEBI:15897"/>
        <dbReference type="ChEBI" id="CHEBI:57560"/>
        <dbReference type="ChEBI" id="CHEBI:57603"/>
        <dbReference type="EC" id="3.5.1.60"/>
    </reaction>
</comment>
<comment type="pathway">
    <text evidence="1">Lipid metabolism; fatty acid metabolism.</text>
</comment>
<comment type="subunit">
    <text evidence="5">Heterodimer of an alpha and a beta subunit, produced by autocatalytic cleavage.</text>
</comment>
<comment type="subcellular location">
    <subcellularLocation>
        <location evidence="1">Lysosome</location>
    </subcellularLocation>
    <subcellularLocation>
        <location evidence="1">Membrane</location>
        <topology evidence="1">Peripheral membrane protein</topology>
    </subcellularLocation>
</comment>
<comment type="PTM">
    <text evidence="5">N-glycosylated.</text>
</comment>
<comment type="PTM">
    <text evidence="1 5">Autoproteolytic cleavage at pH 4.5 gives rise to the alpha and beta subunit (PubMed:30301806). Cleavage gives rise to a conformation change that activates the enzyme. The same catalytic Cys residue mediates the autoproteolytic cleavage and subsequent hydrolysis of lipid substrates (By similarity).</text>
</comment>
<comment type="similarity">
    <text evidence="6">Belongs to the acid ceramidase family.</text>
</comment>
<organism evidence="8">
    <name type="scientific">Caenorhabditis elegans</name>
    <dbReference type="NCBI Taxonomy" id="6239"/>
    <lineage>
        <taxon>Eukaryota</taxon>
        <taxon>Metazoa</taxon>
        <taxon>Ecdysozoa</taxon>
        <taxon>Nematoda</taxon>
        <taxon>Chromadorea</taxon>
        <taxon>Rhabditida</taxon>
        <taxon>Rhabditina</taxon>
        <taxon>Rhabditomorpha</taxon>
        <taxon>Rhabditoidea</taxon>
        <taxon>Rhabditidae</taxon>
        <taxon>Peloderinae</taxon>
        <taxon>Caenorhabditis</taxon>
    </lineage>
</organism>
<dbReference type="EC" id="3.5.1.60" evidence="2"/>
<dbReference type="EMBL" id="BX284603">
    <property type="protein sequence ID" value="CCD72199.1"/>
    <property type="molecule type" value="Genomic_DNA"/>
</dbReference>
<dbReference type="RefSeq" id="NP_497647.1">
    <property type="nucleotide sequence ID" value="NM_065246.2"/>
</dbReference>
<dbReference type="PDB" id="6DY3">
    <property type="method" value="X-ray"/>
    <property type="resolution" value="2.70 A"/>
    <property type="chains" value="A/C/E/G=19-121, B/D/F/H=122-355"/>
</dbReference>
<dbReference type="PDBsum" id="6DY3"/>
<dbReference type="SMR" id="Q9GUI1"/>
<dbReference type="FunCoup" id="Q9GUI1">
    <property type="interactions" value="211"/>
</dbReference>
<dbReference type="STRING" id="6239.Y55D5A.3.1"/>
<dbReference type="MEROPS" id="C89.002"/>
<dbReference type="iPTMnet" id="Q9GUI1"/>
<dbReference type="PaxDb" id="6239-Y55D5A.3"/>
<dbReference type="PeptideAtlas" id="Q9GUI1"/>
<dbReference type="EnsemblMetazoa" id="Y55D5A.3.1">
    <property type="protein sequence ID" value="Y55D5A.3.1"/>
    <property type="gene ID" value="WBGene00021917"/>
</dbReference>
<dbReference type="GeneID" id="190304"/>
<dbReference type="KEGG" id="cel:CELE_Y55D5A.3"/>
<dbReference type="UCSC" id="Y55D5A.3">
    <property type="organism name" value="c. elegans"/>
</dbReference>
<dbReference type="AGR" id="WB:WBGene00021917"/>
<dbReference type="CTD" id="190304"/>
<dbReference type="WormBase" id="Y55D5A.3">
    <property type="protein sequence ID" value="CE27498"/>
    <property type="gene ID" value="WBGene00021917"/>
</dbReference>
<dbReference type="eggNOG" id="ENOG502QT7H">
    <property type="taxonomic scope" value="Eukaryota"/>
</dbReference>
<dbReference type="GeneTree" id="ENSGT00530000063548"/>
<dbReference type="HOGENOM" id="CLU_054401_0_0_1"/>
<dbReference type="InParanoid" id="Q9GUI1"/>
<dbReference type="OMA" id="RTHYPEY"/>
<dbReference type="OrthoDB" id="5273684at2759"/>
<dbReference type="PhylomeDB" id="Q9GUI1"/>
<dbReference type="Reactome" id="R-CEL-112310">
    <property type="pathway name" value="Neurotransmitter release cycle"/>
</dbReference>
<dbReference type="UniPathway" id="UPA00199"/>
<dbReference type="PRO" id="PR:Q9GUI1"/>
<dbReference type="Proteomes" id="UP000001940">
    <property type="component" value="Chromosome III"/>
</dbReference>
<dbReference type="Bgee" id="WBGene00021917">
    <property type="expression patterns" value="Expressed in embryo and 3 other cell types or tissues"/>
</dbReference>
<dbReference type="GO" id="GO:0005764">
    <property type="term" value="C:lysosome"/>
    <property type="evidence" value="ECO:0000250"/>
    <property type="project" value="UniProtKB"/>
</dbReference>
<dbReference type="GO" id="GO:0016020">
    <property type="term" value="C:membrane"/>
    <property type="evidence" value="ECO:0000250"/>
    <property type="project" value="UniProtKB"/>
</dbReference>
<dbReference type="GO" id="GO:0017064">
    <property type="term" value="F:fatty acid amide hydrolase activity"/>
    <property type="evidence" value="ECO:0000250"/>
    <property type="project" value="UniProtKB"/>
</dbReference>
<dbReference type="GO" id="GO:0016810">
    <property type="term" value="F:hydrolase activity, acting on carbon-nitrogen (but not peptide) bonds"/>
    <property type="evidence" value="ECO:0000318"/>
    <property type="project" value="GO_Central"/>
</dbReference>
<dbReference type="GO" id="GO:0047412">
    <property type="term" value="F:N-(long-chain-acyl)ethanolamine deacylase activity"/>
    <property type="evidence" value="ECO:0007669"/>
    <property type="project" value="UniProtKB-EC"/>
</dbReference>
<dbReference type="GO" id="GO:0006631">
    <property type="term" value="P:fatty acid metabolic process"/>
    <property type="evidence" value="ECO:0000250"/>
    <property type="project" value="UniProtKB"/>
</dbReference>
<dbReference type="GO" id="GO:0016042">
    <property type="term" value="P:lipid catabolic process"/>
    <property type="evidence" value="ECO:0007669"/>
    <property type="project" value="UniProtKB-KW"/>
</dbReference>
<dbReference type="GO" id="GO:0070291">
    <property type="term" value="P:N-acylethanolamine metabolic process"/>
    <property type="evidence" value="ECO:0000250"/>
    <property type="project" value="UniProtKB"/>
</dbReference>
<dbReference type="CDD" id="cd01903">
    <property type="entry name" value="Ntn_AC_NAAA"/>
    <property type="match status" value="1"/>
</dbReference>
<dbReference type="FunFam" id="3.60.60.10:FF:000006">
    <property type="entry name" value="N-acylethanolamine-hydrolyzing acid amidase"/>
    <property type="match status" value="1"/>
</dbReference>
<dbReference type="Gene3D" id="3.60.60.10">
    <property type="entry name" value="Penicillin V Acylase, Chain A"/>
    <property type="match status" value="1"/>
</dbReference>
<dbReference type="InterPro" id="IPR016699">
    <property type="entry name" value="Acid_ceramidase-like"/>
</dbReference>
<dbReference type="InterPro" id="IPR029130">
    <property type="entry name" value="Acid_ceramidase_N"/>
</dbReference>
<dbReference type="InterPro" id="IPR029132">
    <property type="entry name" value="CBAH/NAAA_C"/>
</dbReference>
<dbReference type="PANTHER" id="PTHR28583">
    <property type="entry name" value="ACID AMIDASE"/>
    <property type="match status" value="1"/>
</dbReference>
<dbReference type="PANTHER" id="PTHR28583:SF4">
    <property type="entry name" value="N-ACYLETHANOLAMINE-HYDROLYZING ACID AMIDASE"/>
    <property type="match status" value="1"/>
</dbReference>
<dbReference type="Pfam" id="PF02275">
    <property type="entry name" value="CBAH"/>
    <property type="match status" value="1"/>
</dbReference>
<dbReference type="Pfam" id="PF15508">
    <property type="entry name" value="NAAA-beta"/>
    <property type="match status" value="1"/>
</dbReference>
<dbReference type="PIRSF" id="PIRSF017632">
    <property type="entry name" value="Acid_ceramidase-like"/>
    <property type="match status" value="1"/>
</dbReference>
<accession>Q9GUI1</accession>
<evidence type="ECO:0000250" key="1">
    <source>
        <dbReference type="UniProtKB" id="Q02083"/>
    </source>
</evidence>
<evidence type="ECO:0000250" key="2">
    <source>
        <dbReference type="UniProtKB" id="Q5KTC7"/>
    </source>
</evidence>
<evidence type="ECO:0000255" key="3"/>
<evidence type="ECO:0000255" key="4">
    <source>
        <dbReference type="PROSITE-ProRule" id="PRU00498"/>
    </source>
</evidence>
<evidence type="ECO:0000269" key="5">
    <source>
    </source>
</evidence>
<evidence type="ECO:0000305" key="6"/>
<evidence type="ECO:0000305" key="7">
    <source>
    </source>
</evidence>
<evidence type="ECO:0000312" key="8">
    <source>
        <dbReference type="Proteomes" id="UP000001940"/>
    </source>
</evidence>
<evidence type="ECO:0000312" key="9">
    <source>
        <dbReference type="WormBase" id="Y55D5A.3"/>
    </source>
</evidence>
<evidence type="ECO:0007744" key="10">
    <source>
        <dbReference type="PDB" id="6DY3"/>
    </source>
</evidence>
<evidence type="ECO:0007829" key="11">
    <source>
        <dbReference type="PDB" id="6DY3"/>
    </source>
</evidence>
<proteinExistence type="evidence at protein level"/>
<keyword id="KW-0002">3D-structure</keyword>
<keyword id="KW-0068">Autocatalytic cleavage</keyword>
<keyword id="KW-0276">Fatty acid metabolism</keyword>
<keyword id="KW-0325">Glycoprotein</keyword>
<keyword id="KW-0378">Hydrolase</keyword>
<keyword id="KW-0442">Lipid degradation</keyword>
<keyword id="KW-0443">Lipid metabolism</keyword>
<keyword id="KW-0458">Lysosome</keyword>
<keyword id="KW-0472">Membrane</keyword>
<keyword id="KW-1185">Reference proteome</keyword>
<keyword id="KW-0732">Signal</keyword>
<keyword id="KW-0865">Zymogen</keyword>
<gene>
    <name evidence="9" type="ORF">Y55D5A.3</name>
</gene>
<feature type="signal peptide" evidence="3">
    <location>
        <begin position="1"/>
        <end position="17"/>
    </location>
</feature>
<feature type="chain" id="PRO_5004330692" description="N-acylethanolamine-hydrolyzing acid amidase">
    <location>
        <begin position="18"/>
        <end position="355"/>
    </location>
</feature>
<feature type="chain" id="PRO_0000446530" description="N-acylethanolamine-hydrolyzing acid amidase subunit alpha" evidence="7">
    <location>
        <begin position="18"/>
        <end position="121"/>
    </location>
</feature>
<feature type="chain" id="PRO_0000446531" description="N-acylethanolamine-hydrolyzing acid amidase subunit beta" evidence="7">
    <location>
        <begin position="122"/>
        <end position="355"/>
    </location>
</feature>
<feature type="active site" description="Nucleophile" evidence="1">
    <location>
        <position position="122"/>
    </location>
</feature>
<feature type="site" description="Important for enzyme activity" evidence="1">
    <location>
        <position position="138"/>
    </location>
</feature>
<feature type="site" description="Important for enzyme activity" evidence="1">
    <location>
        <position position="284"/>
    </location>
</feature>
<feature type="glycosylation site" description="N-linked (GlcNAc...) asparagine" evidence="5 10">
    <location>
        <position position="150"/>
    </location>
</feature>
<feature type="glycosylation site" description="N-linked (GlcNAc...) asparagine" evidence="4">
    <location>
        <position position="160"/>
    </location>
</feature>
<feature type="glycosylation site" description="N-linked (GlcNAc...) asparagine" evidence="4">
    <location>
        <position position="328"/>
    </location>
</feature>
<feature type="strand" evidence="11">
    <location>
        <begin position="23"/>
        <end position="28"/>
    </location>
</feature>
<feature type="helix" evidence="11">
    <location>
        <begin position="33"/>
        <end position="35"/>
    </location>
</feature>
<feature type="helix" evidence="11">
    <location>
        <begin position="38"/>
        <end position="44"/>
    </location>
</feature>
<feature type="turn" evidence="11">
    <location>
        <begin position="45"/>
        <end position="47"/>
    </location>
</feature>
<feature type="helix" evidence="11">
    <location>
        <begin position="48"/>
        <end position="56"/>
    </location>
</feature>
<feature type="helix" evidence="11">
    <location>
        <begin position="61"/>
        <end position="63"/>
    </location>
</feature>
<feature type="helix" evidence="11">
    <location>
        <begin position="64"/>
        <end position="71"/>
    </location>
</feature>
<feature type="helix" evidence="11">
    <location>
        <begin position="74"/>
        <end position="76"/>
    </location>
</feature>
<feature type="helix" evidence="11">
    <location>
        <begin position="80"/>
        <end position="93"/>
    </location>
</feature>
<feature type="helix" evidence="11">
    <location>
        <begin position="97"/>
        <end position="105"/>
    </location>
</feature>
<feature type="turn" evidence="11">
    <location>
        <begin position="107"/>
        <end position="111"/>
    </location>
</feature>
<feature type="helix" evidence="11">
    <location>
        <begin position="115"/>
        <end position="117"/>
    </location>
</feature>
<feature type="strand" evidence="11">
    <location>
        <begin position="123"/>
        <end position="128"/>
    </location>
</feature>
<feature type="strand" evidence="11">
    <location>
        <begin position="134"/>
        <end position="141"/>
    </location>
</feature>
<feature type="helix" evidence="11">
    <location>
        <begin position="145"/>
        <end position="149"/>
    </location>
</feature>
<feature type="strand" evidence="11">
    <location>
        <begin position="152"/>
        <end position="159"/>
    </location>
</feature>
<feature type="strand" evidence="11">
    <location>
        <begin position="162"/>
        <end position="170"/>
    </location>
</feature>
<feature type="strand" evidence="11">
    <location>
        <begin position="177"/>
        <end position="181"/>
    </location>
</feature>
<feature type="turn" evidence="11">
    <location>
        <begin position="182"/>
        <end position="184"/>
    </location>
</feature>
<feature type="strand" evidence="11">
    <location>
        <begin position="185"/>
        <end position="191"/>
    </location>
</feature>
<feature type="helix" evidence="11">
    <location>
        <begin position="197"/>
        <end position="210"/>
    </location>
</feature>
<feature type="helix" evidence="11">
    <location>
        <begin position="213"/>
        <end position="223"/>
    </location>
</feature>
<feature type="helix" evidence="11">
    <location>
        <begin position="227"/>
        <end position="234"/>
    </location>
</feature>
<feature type="strand" evidence="11">
    <location>
        <begin position="242"/>
        <end position="248"/>
    </location>
</feature>
<feature type="strand" evidence="11">
    <location>
        <begin position="255"/>
        <end position="260"/>
    </location>
</feature>
<feature type="strand" evidence="11">
    <location>
        <begin position="262"/>
        <end position="264"/>
    </location>
</feature>
<feature type="strand" evidence="11">
    <location>
        <begin position="266"/>
        <end position="270"/>
    </location>
</feature>
<feature type="helix" evidence="11">
    <location>
        <begin position="273"/>
        <end position="275"/>
    </location>
</feature>
<feature type="strand" evidence="11">
    <location>
        <begin position="279"/>
        <end position="282"/>
    </location>
</feature>
<feature type="helix" evidence="11">
    <location>
        <begin position="287"/>
        <end position="291"/>
    </location>
</feature>
<feature type="helix" evidence="11">
    <location>
        <begin position="294"/>
        <end position="306"/>
    </location>
</feature>
<feature type="helix" evidence="11">
    <location>
        <begin position="313"/>
        <end position="320"/>
    </location>
</feature>
<feature type="turn" evidence="11">
    <location>
        <begin position="323"/>
        <end position="325"/>
    </location>
</feature>
<feature type="strand" evidence="11">
    <location>
        <begin position="330"/>
        <end position="336"/>
    </location>
</feature>
<feature type="helix" evidence="11">
    <location>
        <begin position="343"/>
        <end position="347"/>
    </location>
</feature>